<name>RL24_BORRA</name>
<dbReference type="EMBL" id="CP000993">
    <property type="protein sequence ID" value="ACH94727.1"/>
    <property type="molecule type" value="Genomic_DNA"/>
</dbReference>
<dbReference type="RefSeq" id="WP_012538243.1">
    <property type="nucleotide sequence ID" value="NZ_CP169983.1"/>
</dbReference>
<dbReference type="SMR" id="B5RPJ3"/>
<dbReference type="KEGG" id="bre:BRE_495"/>
<dbReference type="HOGENOM" id="CLU_093315_2_3_12"/>
<dbReference type="Proteomes" id="UP000000612">
    <property type="component" value="Chromosome"/>
</dbReference>
<dbReference type="GO" id="GO:1990904">
    <property type="term" value="C:ribonucleoprotein complex"/>
    <property type="evidence" value="ECO:0007669"/>
    <property type="project" value="UniProtKB-KW"/>
</dbReference>
<dbReference type="GO" id="GO:0005840">
    <property type="term" value="C:ribosome"/>
    <property type="evidence" value="ECO:0007669"/>
    <property type="project" value="UniProtKB-KW"/>
</dbReference>
<dbReference type="GO" id="GO:0019843">
    <property type="term" value="F:rRNA binding"/>
    <property type="evidence" value="ECO:0007669"/>
    <property type="project" value="UniProtKB-UniRule"/>
</dbReference>
<dbReference type="GO" id="GO:0003735">
    <property type="term" value="F:structural constituent of ribosome"/>
    <property type="evidence" value="ECO:0007669"/>
    <property type="project" value="InterPro"/>
</dbReference>
<dbReference type="GO" id="GO:0006412">
    <property type="term" value="P:translation"/>
    <property type="evidence" value="ECO:0007669"/>
    <property type="project" value="UniProtKB-UniRule"/>
</dbReference>
<dbReference type="CDD" id="cd06089">
    <property type="entry name" value="KOW_RPL26"/>
    <property type="match status" value="1"/>
</dbReference>
<dbReference type="Gene3D" id="2.30.30.30">
    <property type="match status" value="1"/>
</dbReference>
<dbReference type="HAMAP" id="MF_01326_B">
    <property type="entry name" value="Ribosomal_uL24_B"/>
    <property type="match status" value="1"/>
</dbReference>
<dbReference type="InterPro" id="IPR005824">
    <property type="entry name" value="KOW"/>
</dbReference>
<dbReference type="InterPro" id="IPR014722">
    <property type="entry name" value="Rib_uL2_dom2"/>
</dbReference>
<dbReference type="InterPro" id="IPR003256">
    <property type="entry name" value="Ribosomal_uL24"/>
</dbReference>
<dbReference type="InterPro" id="IPR005825">
    <property type="entry name" value="Ribosomal_uL24_CS"/>
</dbReference>
<dbReference type="InterPro" id="IPR041988">
    <property type="entry name" value="Ribosomal_uL24_KOW"/>
</dbReference>
<dbReference type="InterPro" id="IPR008991">
    <property type="entry name" value="Translation_prot_SH3-like_sf"/>
</dbReference>
<dbReference type="NCBIfam" id="TIGR01079">
    <property type="entry name" value="rplX_bact"/>
    <property type="match status" value="1"/>
</dbReference>
<dbReference type="PANTHER" id="PTHR12903">
    <property type="entry name" value="MITOCHONDRIAL RIBOSOMAL PROTEIN L24"/>
    <property type="match status" value="1"/>
</dbReference>
<dbReference type="Pfam" id="PF00467">
    <property type="entry name" value="KOW"/>
    <property type="match status" value="1"/>
</dbReference>
<dbReference type="Pfam" id="PF17136">
    <property type="entry name" value="ribosomal_L24"/>
    <property type="match status" value="1"/>
</dbReference>
<dbReference type="SMART" id="SM00739">
    <property type="entry name" value="KOW"/>
    <property type="match status" value="1"/>
</dbReference>
<dbReference type="SUPFAM" id="SSF50104">
    <property type="entry name" value="Translation proteins SH3-like domain"/>
    <property type="match status" value="1"/>
</dbReference>
<dbReference type="PROSITE" id="PS01108">
    <property type="entry name" value="RIBOSOMAL_L24"/>
    <property type="match status" value="1"/>
</dbReference>
<evidence type="ECO:0000255" key="1">
    <source>
        <dbReference type="HAMAP-Rule" id="MF_01326"/>
    </source>
</evidence>
<evidence type="ECO:0000305" key="2"/>
<accession>B5RPJ3</accession>
<feature type="chain" id="PRO_1000141971" description="Large ribosomal subunit protein uL24">
    <location>
        <begin position="1"/>
        <end position="101"/>
    </location>
</feature>
<reference key="1">
    <citation type="journal article" date="2008" name="PLoS Genet.">
        <title>The genome of Borrelia recurrentis, the agent of deadly louse-borne relapsing fever, is a degraded subset of tick-borne Borrelia duttonii.</title>
        <authorList>
            <person name="Lescot M."/>
            <person name="Audic S."/>
            <person name="Robert C."/>
            <person name="Nguyen T.T."/>
            <person name="Blanc G."/>
            <person name="Cutler S.J."/>
            <person name="Wincker P."/>
            <person name="Couloux A."/>
            <person name="Claverie J.-M."/>
            <person name="Raoult D."/>
            <person name="Drancourt M."/>
        </authorList>
    </citation>
    <scope>NUCLEOTIDE SEQUENCE [LARGE SCALE GENOMIC DNA]</scope>
    <source>
        <strain>A1</strain>
    </source>
</reference>
<comment type="function">
    <text evidence="1">One of two assembly initiator proteins, it binds directly to the 5'-end of the 23S rRNA, where it nucleates assembly of the 50S subunit.</text>
</comment>
<comment type="function">
    <text evidence="1">One of the proteins that surrounds the polypeptide exit tunnel on the outside of the subunit.</text>
</comment>
<comment type="subunit">
    <text evidence="1">Part of the 50S ribosomal subunit.</text>
</comment>
<comment type="similarity">
    <text evidence="1">Belongs to the universal ribosomal protein uL24 family.</text>
</comment>
<organism>
    <name type="scientific">Borrelia recurrentis (strain A1)</name>
    <dbReference type="NCBI Taxonomy" id="412418"/>
    <lineage>
        <taxon>Bacteria</taxon>
        <taxon>Pseudomonadati</taxon>
        <taxon>Spirochaetota</taxon>
        <taxon>Spirochaetia</taxon>
        <taxon>Spirochaetales</taxon>
        <taxon>Borreliaceae</taxon>
        <taxon>Borrelia</taxon>
    </lineage>
</organism>
<gene>
    <name evidence="1" type="primary">rplX</name>
    <name type="ordered locus">BRE_495</name>
</gene>
<keyword id="KW-0687">Ribonucleoprotein</keyword>
<keyword id="KW-0689">Ribosomal protein</keyword>
<keyword id="KW-0694">RNA-binding</keyword>
<keyword id="KW-0699">rRNA-binding</keyword>
<sequence>MKTKLRVGDKVKILCGKDRGKVGEIASIDRKKFKVTVKSCNMIKKVIKARTPQEKGKIIDKEAPMDISNVMLFSNGVISRVGIKFENNEKKRYLKKSGENV</sequence>
<protein>
    <recommendedName>
        <fullName evidence="1">Large ribosomal subunit protein uL24</fullName>
    </recommendedName>
    <alternativeName>
        <fullName evidence="2">50S ribosomal protein L24</fullName>
    </alternativeName>
</protein>
<proteinExistence type="inferred from homology"/>